<proteinExistence type="inferred from homology"/>
<sequence>MKKITILGSTGSIGINALSIIQKNPDLFKVIALVANKNFSIMLRQCELFSPDWVAMRDEKSAHILRKKLKHSKINTQVLTGEKDICALAALEETDHVISAIVGMAGLLPTLSAIHAGKTILLANKESLITSGYFFMKALSSSGAKIIPIDSEHNAIFQVLPLEIQKNLGKTTLEKNSIKHLVLTGSGGPFYKFSSSDLSNVTPDQACSHPNWLMGKKISVDSATMMNKGLEYAEARWLFNALESEIKILIHPESIIHSMVQYYDGSLLAQLSAPDIRTSISYAMSWPDRICTEVDYLNFYKINNLTFFEPDFTQFPCLKLAIDAFSQGQASMTVLNAANEIAVSSFLDSKISFTKIYEINMEILMSSCFSEPKCIQDILEIDRKVRILAKNKVSSLIF</sequence>
<keyword id="KW-0414">Isoprene biosynthesis</keyword>
<keyword id="KW-0464">Manganese</keyword>
<keyword id="KW-0479">Metal-binding</keyword>
<keyword id="KW-0521">NADP</keyword>
<keyword id="KW-0560">Oxidoreductase</keyword>
<organism>
    <name type="scientific">Buchnera aphidicola subsp. Acyrthosiphon pisum (strain Tuc7)</name>
    <dbReference type="NCBI Taxonomy" id="561501"/>
    <lineage>
        <taxon>Bacteria</taxon>
        <taxon>Pseudomonadati</taxon>
        <taxon>Pseudomonadota</taxon>
        <taxon>Gammaproteobacteria</taxon>
        <taxon>Enterobacterales</taxon>
        <taxon>Erwiniaceae</taxon>
        <taxon>Buchnera</taxon>
    </lineage>
</organism>
<gene>
    <name evidence="1" type="primary">dxr</name>
    <name type="ordered locus">BUAPTUC7_232</name>
</gene>
<name>DXR_BUCAT</name>
<protein>
    <recommendedName>
        <fullName evidence="1">1-deoxy-D-xylulose 5-phosphate reductoisomerase</fullName>
        <shortName evidence="1">DXP reductoisomerase</shortName>
        <ecNumber evidence="1">1.1.1.267</ecNumber>
    </recommendedName>
    <alternativeName>
        <fullName evidence="1">1-deoxyxylulose-5-phosphate reductoisomerase</fullName>
    </alternativeName>
    <alternativeName>
        <fullName evidence="1">2-C-methyl-D-erythritol 4-phosphate synthase</fullName>
    </alternativeName>
</protein>
<accession>B8D7D6</accession>
<evidence type="ECO:0000255" key="1">
    <source>
        <dbReference type="HAMAP-Rule" id="MF_00183"/>
    </source>
</evidence>
<comment type="function">
    <text evidence="1">Catalyzes the NADPH-dependent rearrangement and reduction of 1-deoxy-D-xylulose-5-phosphate (DXP) to 2-C-methyl-D-erythritol 4-phosphate (MEP).</text>
</comment>
<comment type="catalytic activity">
    <reaction evidence="1">
        <text>2-C-methyl-D-erythritol 4-phosphate + NADP(+) = 1-deoxy-D-xylulose 5-phosphate + NADPH + H(+)</text>
        <dbReference type="Rhea" id="RHEA:13717"/>
        <dbReference type="ChEBI" id="CHEBI:15378"/>
        <dbReference type="ChEBI" id="CHEBI:57783"/>
        <dbReference type="ChEBI" id="CHEBI:57792"/>
        <dbReference type="ChEBI" id="CHEBI:58262"/>
        <dbReference type="ChEBI" id="CHEBI:58349"/>
        <dbReference type="EC" id="1.1.1.267"/>
    </reaction>
    <physiologicalReaction direction="right-to-left" evidence="1">
        <dbReference type="Rhea" id="RHEA:13719"/>
    </physiologicalReaction>
</comment>
<comment type="cofactor">
    <cofactor evidence="1">
        <name>Mg(2+)</name>
        <dbReference type="ChEBI" id="CHEBI:18420"/>
    </cofactor>
    <cofactor evidence="1">
        <name>Mn(2+)</name>
        <dbReference type="ChEBI" id="CHEBI:29035"/>
    </cofactor>
</comment>
<comment type="pathway">
    <text evidence="1">Isoprenoid biosynthesis; isopentenyl diphosphate biosynthesis via DXP pathway; isopentenyl diphosphate from 1-deoxy-D-xylulose 5-phosphate: step 1/6.</text>
</comment>
<comment type="subunit">
    <text evidence="1">Homodimer.</text>
</comment>
<comment type="similarity">
    <text evidence="1">Belongs to the DXR family.</text>
</comment>
<feature type="chain" id="PRO_1000124081" description="1-deoxy-D-xylulose 5-phosphate reductoisomerase">
    <location>
        <begin position="1"/>
        <end position="398"/>
    </location>
</feature>
<feature type="binding site" evidence="1">
    <location>
        <position position="10"/>
    </location>
    <ligand>
        <name>NADPH</name>
        <dbReference type="ChEBI" id="CHEBI:57783"/>
    </ligand>
</feature>
<feature type="binding site" evidence="1">
    <location>
        <position position="11"/>
    </location>
    <ligand>
        <name>NADPH</name>
        <dbReference type="ChEBI" id="CHEBI:57783"/>
    </ligand>
</feature>
<feature type="binding site" evidence="1">
    <location>
        <position position="12"/>
    </location>
    <ligand>
        <name>NADPH</name>
        <dbReference type="ChEBI" id="CHEBI:57783"/>
    </ligand>
</feature>
<feature type="binding site" evidence="1">
    <location>
        <position position="13"/>
    </location>
    <ligand>
        <name>NADPH</name>
        <dbReference type="ChEBI" id="CHEBI:57783"/>
    </ligand>
</feature>
<feature type="binding site" evidence="1">
    <location>
        <position position="37"/>
    </location>
    <ligand>
        <name>NADPH</name>
        <dbReference type="ChEBI" id="CHEBI:57783"/>
    </ligand>
</feature>
<feature type="binding site" evidence="1">
    <location>
        <position position="38"/>
    </location>
    <ligand>
        <name>NADPH</name>
        <dbReference type="ChEBI" id="CHEBI:57783"/>
    </ligand>
</feature>
<feature type="binding site" evidence="1">
    <location>
        <position position="124"/>
    </location>
    <ligand>
        <name>NADPH</name>
        <dbReference type="ChEBI" id="CHEBI:57783"/>
    </ligand>
</feature>
<feature type="binding site" evidence="1">
    <location>
        <position position="125"/>
    </location>
    <ligand>
        <name>1-deoxy-D-xylulose 5-phosphate</name>
        <dbReference type="ChEBI" id="CHEBI:57792"/>
    </ligand>
</feature>
<feature type="binding site" evidence="1">
    <location>
        <position position="126"/>
    </location>
    <ligand>
        <name>NADPH</name>
        <dbReference type="ChEBI" id="CHEBI:57783"/>
    </ligand>
</feature>
<feature type="binding site" evidence="1">
    <location>
        <position position="150"/>
    </location>
    <ligand>
        <name>Mn(2+)</name>
        <dbReference type="ChEBI" id="CHEBI:29035"/>
    </ligand>
</feature>
<feature type="binding site" evidence="1">
    <location>
        <position position="151"/>
    </location>
    <ligand>
        <name>1-deoxy-D-xylulose 5-phosphate</name>
        <dbReference type="ChEBI" id="CHEBI:57792"/>
    </ligand>
</feature>
<feature type="binding site" evidence="1">
    <location>
        <position position="152"/>
    </location>
    <ligand>
        <name>1-deoxy-D-xylulose 5-phosphate</name>
        <dbReference type="ChEBI" id="CHEBI:57792"/>
    </ligand>
</feature>
<feature type="binding site" evidence="1">
    <location>
        <position position="152"/>
    </location>
    <ligand>
        <name>Mn(2+)</name>
        <dbReference type="ChEBI" id="CHEBI:29035"/>
    </ligand>
</feature>
<feature type="binding site" evidence="1">
    <location>
        <position position="186"/>
    </location>
    <ligand>
        <name>1-deoxy-D-xylulose 5-phosphate</name>
        <dbReference type="ChEBI" id="CHEBI:57792"/>
    </ligand>
</feature>
<feature type="binding site" evidence="1">
    <location>
        <position position="209"/>
    </location>
    <ligand>
        <name>1-deoxy-D-xylulose 5-phosphate</name>
        <dbReference type="ChEBI" id="CHEBI:57792"/>
    </ligand>
</feature>
<feature type="binding site" evidence="1">
    <location>
        <position position="215"/>
    </location>
    <ligand>
        <name>NADPH</name>
        <dbReference type="ChEBI" id="CHEBI:57783"/>
    </ligand>
</feature>
<feature type="binding site" evidence="1">
    <location>
        <position position="222"/>
    </location>
    <ligand>
        <name>1-deoxy-D-xylulose 5-phosphate</name>
        <dbReference type="ChEBI" id="CHEBI:57792"/>
    </ligand>
</feature>
<feature type="binding site" evidence="1">
    <location>
        <position position="227"/>
    </location>
    <ligand>
        <name>1-deoxy-D-xylulose 5-phosphate</name>
        <dbReference type="ChEBI" id="CHEBI:57792"/>
    </ligand>
</feature>
<feature type="binding site" evidence="1">
    <location>
        <position position="228"/>
    </location>
    <ligand>
        <name>1-deoxy-D-xylulose 5-phosphate</name>
        <dbReference type="ChEBI" id="CHEBI:57792"/>
    </ligand>
</feature>
<feature type="binding site" evidence="1">
    <location>
        <position position="231"/>
    </location>
    <ligand>
        <name>1-deoxy-D-xylulose 5-phosphate</name>
        <dbReference type="ChEBI" id="CHEBI:57792"/>
    </ligand>
</feature>
<feature type="binding site" evidence="1">
    <location>
        <position position="231"/>
    </location>
    <ligand>
        <name>Mn(2+)</name>
        <dbReference type="ChEBI" id="CHEBI:29035"/>
    </ligand>
</feature>
<reference key="1">
    <citation type="journal article" date="2009" name="Science">
        <title>The dynamics and time scale of ongoing genomic erosion in symbiotic bacteria.</title>
        <authorList>
            <person name="Moran N.A."/>
            <person name="McLaughlin H.J."/>
            <person name="Sorek R."/>
        </authorList>
    </citation>
    <scope>NUCLEOTIDE SEQUENCE [LARGE SCALE GENOMIC DNA]</scope>
    <source>
        <strain>Tuc7</strain>
    </source>
</reference>
<dbReference type="EC" id="1.1.1.267" evidence="1"/>
<dbReference type="EMBL" id="CP001158">
    <property type="protein sequence ID" value="ACL30051.1"/>
    <property type="molecule type" value="Genomic_DNA"/>
</dbReference>
<dbReference type="SMR" id="B8D7D6"/>
<dbReference type="KEGG" id="bau:BUAPTUC7_232"/>
<dbReference type="HOGENOM" id="CLU_035714_0_1_6"/>
<dbReference type="UniPathway" id="UPA00056">
    <property type="reaction ID" value="UER00092"/>
</dbReference>
<dbReference type="GO" id="GO:0030604">
    <property type="term" value="F:1-deoxy-D-xylulose-5-phosphate reductoisomerase activity"/>
    <property type="evidence" value="ECO:0007669"/>
    <property type="project" value="UniProtKB-UniRule"/>
</dbReference>
<dbReference type="GO" id="GO:0030145">
    <property type="term" value="F:manganese ion binding"/>
    <property type="evidence" value="ECO:0007669"/>
    <property type="project" value="TreeGrafter"/>
</dbReference>
<dbReference type="GO" id="GO:0070402">
    <property type="term" value="F:NADPH binding"/>
    <property type="evidence" value="ECO:0007669"/>
    <property type="project" value="InterPro"/>
</dbReference>
<dbReference type="GO" id="GO:0051484">
    <property type="term" value="P:isopentenyl diphosphate biosynthetic process, methylerythritol 4-phosphate pathway involved in terpenoid biosynthetic process"/>
    <property type="evidence" value="ECO:0007669"/>
    <property type="project" value="TreeGrafter"/>
</dbReference>
<dbReference type="FunFam" id="1.10.1740.10:FF:000004">
    <property type="entry name" value="1-deoxy-D-xylulose 5-phosphate reductoisomerase"/>
    <property type="match status" value="1"/>
</dbReference>
<dbReference type="FunFam" id="3.40.50.720:FF:000045">
    <property type="entry name" value="1-deoxy-D-xylulose 5-phosphate reductoisomerase"/>
    <property type="match status" value="1"/>
</dbReference>
<dbReference type="Gene3D" id="1.10.1740.10">
    <property type="match status" value="1"/>
</dbReference>
<dbReference type="Gene3D" id="3.40.50.720">
    <property type="entry name" value="NAD(P)-binding Rossmann-like Domain"/>
    <property type="match status" value="1"/>
</dbReference>
<dbReference type="HAMAP" id="MF_00183">
    <property type="entry name" value="DXP_reductoisom"/>
    <property type="match status" value="1"/>
</dbReference>
<dbReference type="InterPro" id="IPR003821">
    <property type="entry name" value="DXP_reductoisomerase"/>
</dbReference>
<dbReference type="InterPro" id="IPR013644">
    <property type="entry name" value="DXP_reductoisomerase_C"/>
</dbReference>
<dbReference type="InterPro" id="IPR013512">
    <property type="entry name" value="DXP_reductoisomerase_N"/>
</dbReference>
<dbReference type="InterPro" id="IPR026877">
    <property type="entry name" value="DXPR_C"/>
</dbReference>
<dbReference type="InterPro" id="IPR036169">
    <property type="entry name" value="DXPR_C_sf"/>
</dbReference>
<dbReference type="InterPro" id="IPR036291">
    <property type="entry name" value="NAD(P)-bd_dom_sf"/>
</dbReference>
<dbReference type="NCBIfam" id="TIGR00243">
    <property type="entry name" value="Dxr"/>
    <property type="match status" value="1"/>
</dbReference>
<dbReference type="NCBIfam" id="NF003938">
    <property type="entry name" value="PRK05447.1-1"/>
    <property type="match status" value="1"/>
</dbReference>
<dbReference type="PANTHER" id="PTHR30525">
    <property type="entry name" value="1-DEOXY-D-XYLULOSE 5-PHOSPHATE REDUCTOISOMERASE"/>
    <property type="match status" value="1"/>
</dbReference>
<dbReference type="PANTHER" id="PTHR30525:SF0">
    <property type="entry name" value="1-DEOXY-D-XYLULOSE 5-PHOSPHATE REDUCTOISOMERASE, CHLOROPLASTIC"/>
    <property type="match status" value="1"/>
</dbReference>
<dbReference type="Pfam" id="PF08436">
    <property type="entry name" value="DXP_redisom_C"/>
    <property type="match status" value="1"/>
</dbReference>
<dbReference type="Pfam" id="PF02670">
    <property type="entry name" value="DXP_reductoisom"/>
    <property type="match status" value="1"/>
</dbReference>
<dbReference type="Pfam" id="PF13288">
    <property type="entry name" value="DXPR_C"/>
    <property type="match status" value="1"/>
</dbReference>
<dbReference type="PIRSF" id="PIRSF006205">
    <property type="entry name" value="Dxp_reductismrs"/>
    <property type="match status" value="1"/>
</dbReference>
<dbReference type="SUPFAM" id="SSF69055">
    <property type="entry name" value="1-deoxy-D-xylulose-5-phosphate reductoisomerase, C-terminal domain"/>
    <property type="match status" value="1"/>
</dbReference>
<dbReference type="SUPFAM" id="SSF55347">
    <property type="entry name" value="Glyceraldehyde-3-phosphate dehydrogenase-like, C-terminal domain"/>
    <property type="match status" value="1"/>
</dbReference>
<dbReference type="SUPFAM" id="SSF51735">
    <property type="entry name" value="NAD(P)-binding Rossmann-fold domains"/>
    <property type="match status" value="1"/>
</dbReference>